<reference key="1">
    <citation type="journal article" date="2010" name="PLoS Genet.">
        <title>Genome sequence of the plant growth promoting endophytic bacterium Enterobacter sp. 638.</title>
        <authorList>
            <person name="Taghavi S."/>
            <person name="van der Lelie D."/>
            <person name="Hoffman A."/>
            <person name="Zhang Y.B."/>
            <person name="Walla M.D."/>
            <person name="Vangronsveld J."/>
            <person name="Newman L."/>
            <person name="Monchy S."/>
        </authorList>
    </citation>
    <scope>NUCLEOTIDE SEQUENCE [LARGE SCALE GENOMIC DNA]</scope>
    <source>
        <strain>638</strain>
    </source>
</reference>
<accession>A4WGE3</accession>
<protein>
    <recommendedName>
        <fullName evidence="1">Aspartate--ammonia ligase</fullName>
        <ecNumber evidence="1">6.3.1.1</ecNumber>
    </recommendedName>
    <alternativeName>
        <fullName evidence="1">Asparagine synthetase A</fullName>
    </alternativeName>
</protein>
<keyword id="KW-0028">Amino-acid biosynthesis</keyword>
<keyword id="KW-0061">Asparagine biosynthesis</keyword>
<keyword id="KW-0067">ATP-binding</keyword>
<keyword id="KW-0963">Cytoplasm</keyword>
<keyword id="KW-0436">Ligase</keyword>
<keyword id="KW-0547">Nucleotide-binding</keyword>
<organism>
    <name type="scientific">Enterobacter sp. (strain 638)</name>
    <dbReference type="NCBI Taxonomy" id="399742"/>
    <lineage>
        <taxon>Bacteria</taxon>
        <taxon>Pseudomonadati</taxon>
        <taxon>Pseudomonadota</taxon>
        <taxon>Gammaproteobacteria</taxon>
        <taxon>Enterobacterales</taxon>
        <taxon>Enterobacteriaceae</taxon>
        <taxon>Enterobacter</taxon>
    </lineage>
</organism>
<comment type="catalytic activity">
    <reaction evidence="1">
        <text>L-aspartate + NH4(+) + ATP = L-asparagine + AMP + diphosphate + H(+)</text>
        <dbReference type="Rhea" id="RHEA:11372"/>
        <dbReference type="ChEBI" id="CHEBI:15378"/>
        <dbReference type="ChEBI" id="CHEBI:28938"/>
        <dbReference type="ChEBI" id="CHEBI:29991"/>
        <dbReference type="ChEBI" id="CHEBI:30616"/>
        <dbReference type="ChEBI" id="CHEBI:33019"/>
        <dbReference type="ChEBI" id="CHEBI:58048"/>
        <dbReference type="ChEBI" id="CHEBI:456215"/>
        <dbReference type="EC" id="6.3.1.1"/>
    </reaction>
</comment>
<comment type="pathway">
    <text evidence="1">Amino-acid biosynthesis; L-asparagine biosynthesis; L-asparagine from L-aspartate (ammonia route): step 1/1.</text>
</comment>
<comment type="subcellular location">
    <subcellularLocation>
        <location evidence="1">Cytoplasm</location>
    </subcellularLocation>
</comment>
<comment type="similarity">
    <text evidence="1">Belongs to the class-II aminoacyl-tRNA synthetase family. AsnA subfamily.</text>
</comment>
<gene>
    <name evidence="1" type="primary">asnA</name>
    <name type="ordered locus">Ent638_4120</name>
</gene>
<evidence type="ECO:0000255" key="1">
    <source>
        <dbReference type="HAMAP-Rule" id="MF_00555"/>
    </source>
</evidence>
<feature type="chain" id="PRO_1000061105" description="Aspartate--ammonia ligase">
    <location>
        <begin position="1"/>
        <end position="330"/>
    </location>
</feature>
<proteinExistence type="inferred from homology"/>
<dbReference type="EC" id="6.3.1.1" evidence="1"/>
<dbReference type="EMBL" id="CP000653">
    <property type="protein sequence ID" value="ABP62773.1"/>
    <property type="molecule type" value="Genomic_DNA"/>
</dbReference>
<dbReference type="RefSeq" id="WP_015961077.1">
    <property type="nucleotide sequence ID" value="NC_009436.1"/>
</dbReference>
<dbReference type="SMR" id="A4WGE3"/>
<dbReference type="STRING" id="399742.Ent638_4120"/>
<dbReference type="KEGG" id="ent:Ent638_4120"/>
<dbReference type="eggNOG" id="COG2502">
    <property type="taxonomic scope" value="Bacteria"/>
</dbReference>
<dbReference type="HOGENOM" id="CLU_071543_0_0_6"/>
<dbReference type="OrthoDB" id="3185462at2"/>
<dbReference type="UniPathway" id="UPA00134">
    <property type="reaction ID" value="UER00194"/>
</dbReference>
<dbReference type="Proteomes" id="UP000000230">
    <property type="component" value="Chromosome"/>
</dbReference>
<dbReference type="GO" id="GO:0005829">
    <property type="term" value="C:cytosol"/>
    <property type="evidence" value="ECO:0007669"/>
    <property type="project" value="TreeGrafter"/>
</dbReference>
<dbReference type="GO" id="GO:0004071">
    <property type="term" value="F:aspartate-ammonia ligase activity"/>
    <property type="evidence" value="ECO:0007669"/>
    <property type="project" value="UniProtKB-UniRule"/>
</dbReference>
<dbReference type="GO" id="GO:0005524">
    <property type="term" value="F:ATP binding"/>
    <property type="evidence" value="ECO:0007669"/>
    <property type="project" value="UniProtKB-UniRule"/>
</dbReference>
<dbReference type="GO" id="GO:0070981">
    <property type="term" value="P:L-asparagine biosynthetic process"/>
    <property type="evidence" value="ECO:0007669"/>
    <property type="project" value="UniProtKB-UniRule"/>
</dbReference>
<dbReference type="Gene3D" id="3.30.930.10">
    <property type="entry name" value="Bira Bifunctional Protein, Domain 2"/>
    <property type="match status" value="1"/>
</dbReference>
<dbReference type="HAMAP" id="MF_00555">
    <property type="entry name" value="AsnA"/>
    <property type="match status" value="1"/>
</dbReference>
<dbReference type="InterPro" id="IPR006195">
    <property type="entry name" value="aa-tRNA-synth_II"/>
</dbReference>
<dbReference type="InterPro" id="IPR045864">
    <property type="entry name" value="aa-tRNA-synth_II/BPL/LPL"/>
</dbReference>
<dbReference type="InterPro" id="IPR004618">
    <property type="entry name" value="AsnA"/>
</dbReference>
<dbReference type="NCBIfam" id="TIGR00669">
    <property type="entry name" value="asnA"/>
    <property type="match status" value="1"/>
</dbReference>
<dbReference type="PANTHER" id="PTHR30073">
    <property type="entry name" value="ASPARTATE--AMMONIA LIGASE"/>
    <property type="match status" value="1"/>
</dbReference>
<dbReference type="PANTHER" id="PTHR30073:SF5">
    <property type="entry name" value="ASPARTATE--AMMONIA LIGASE"/>
    <property type="match status" value="1"/>
</dbReference>
<dbReference type="Pfam" id="PF03590">
    <property type="entry name" value="AsnA"/>
    <property type="match status" value="1"/>
</dbReference>
<dbReference type="PIRSF" id="PIRSF001555">
    <property type="entry name" value="Asp_ammon_ligase"/>
    <property type="match status" value="1"/>
</dbReference>
<dbReference type="SUPFAM" id="SSF55681">
    <property type="entry name" value="Class II aaRS and biotin synthetases"/>
    <property type="match status" value="1"/>
</dbReference>
<dbReference type="PROSITE" id="PS50862">
    <property type="entry name" value="AA_TRNA_LIGASE_II"/>
    <property type="match status" value="1"/>
</dbReference>
<sequence>MKTAYIVKQRQISFVKSHFSRQLEEKLGLIEVQAPILSRVGDGTQDNLSGCEKAVQVKVKTLPDAQFEVVHSLAKWKRQTLGQHDFSAGEGLYTHMKALRPDEDRLTAIHSVYVDQWDWERVMGDGERHVGTLKSTVEAIYAGIKATETAVSKEFGLTPFLPDTIHFIHSQDLLSRFPDLDAKGRERAIAKELGAVFLIGIGGKLSDGKRHDVRAPDYDDWSTSGESERAGLNGDILVWNPILEDAFELSSMGIRVDADALKRQLAVTGDEDRLKLEWHQALLRGEMPQTIGGGIGQSRLTMLLLQLSHIGQVQCGVWPQQVRASVDSLL</sequence>
<name>ASNA_ENT38</name>